<reference key="1">
    <citation type="journal article" date="2003" name="DNA Res.">
        <title>Complete genome structure of Gloeobacter violaceus PCC 7421, a cyanobacterium that lacks thylakoids.</title>
        <authorList>
            <person name="Nakamura Y."/>
            <person name="Kaneko T."/>
            <person name="Sato S."/>
            <person name="Mimuro M."/>
            <person name="Miyashita H."/>
            <person name="Tsuchiya T."/>
            <person name="Sasamoto S."/>
            <person name="Watanabe A."/>
            <person name="Kawashima K."/>
            <person name="Kishida Y."/>
            <person name="Kiyokawa C."/>
            <person name="Kohara M."/>
            <person name="Matsumoto M."/>
            <person name="Matsuno A."/>
            <person name="Nakazaki N."/>
            <person name="Shimpo S."/>
            <person name="Takeuchi C."/>
            <person name="Yamada M."/>
            <person name="Tabata S."/>
        </authorList>
    </citation>
    <scope>NUCLEOTIDE SEQUENCE [LARGE SCALE GENOMIC DNA]</scope>
    <source>
        <strain>ATCC 29082 / PCC 7421</strain>
    </source>
</reference>
<accession>Q7M7A9</accession>
<protein>
    <recommendedName>
        <fullName evidence="1">Photosystem II protein D1 1</fullName>
        <shortName evidence="1">PSII D1 protein 1</shortName>
        <ecNumber evidence="1">1.10.3.9</ecNumber>
    </recommendedName>
    <alternativeName>
        <fullName evidence="1">Photosystem II Q(B) protein 1</fullName>
    </alternativeName>
</protein>
<feature type="chain" id="PRO_0000316345" description="Photosystem II protein D1 1">
    <location>
        <begin position="1"/>
        <end position="344"/>
    </location>
</feature>
<feature type="propeptide" id="PRO_0000316346" evidence="1">
    <location>
        <begin position="345"/>
        <end position="360"/>
    </location>
</feature>
<feature type="transmembrane region" description="Helical" evidence="1">
    <location>
        <begin position="29"/>
        <end position="46"/>
    </location>
</feature>
<feature type="transmembrane region" description="Helical" evidence="1">
    <location>
        <begin position="118"/>
        <end position="133"/>
    </location>
</feature>
<feature type="transmembrane region" description="Helical" evidence="1">
    <location>
        <begin position="142"/>
        <end position="156"/>
    </location>
</feature>
<feature type="transmembrane region" description="Helical" evidence="1">
    <location>
        <begin position="197"/>
        <end position="218"/>
    </location>
</feature>
<feature type="transmembrane region" description="Helical" evidence="1">
    <location>
        <begin position="274"/>
        <end position="288"/>
    </location>
</feature>
<feature type="binding site" description="axial binding residue" evidence="1">
    <location>
        <position position="118"/>
    </location>
    <ligand>
        <name>chlorophyll a</name>
        <dbReference type="ChEBI" id="CHEBI:58416"/>
        <label>ChlzD1</label>
    </ligand>
    <ligandPart>
        <name>Mg</name>
        <dbReference type="ChEBI" id="CHEBI:25107"/>
    </ligandPart>
</feature>
<feature type="binding site" evidence="1">
    <location>
        <position position="126"/>
    </location>
    <ligand>
        <name>pheophytin a</name>
        <dbReference type="ChEBI" id="CHEBI:136840"/>
        <label>D1</label>
    </ligand>
</feature>
<feature type="binding site" evidence="1">
    <location>
        <position position="170"/>
    </location>
    <ligand>
        <name>[CaMn4O5] cluster</name>
        <dbReference type="ChEBI" id="CHEBI:189552"/>
    </ligand>
</feature>
<feature type="binding site" evidence="1">
    <location>
        <position position="189"/>
    </location>
    <ligand>
        <name>[CaMn4O5] cluster</name>
        <dbReference type="ChEBI" id="CHEBI:189552"/>
    </ligand>
</feature>
<feature type="binding site" description="axial binding residue" evidence="1">
    <location>
        <position position="198"/>
    </location>
    <ligand>
        <name>chlorophyll a</name>
        <dbReference type="ChEBI" id="CHEBI:58416"/>
        <label>PD1</label>
    </ligand>
    <ligandPart>
        <name>Mg</name>
        <dbReference type="ChEBI" id="CHEBI:25107"/>
    </ligandPart>
</feature>
<feature type="binding site" evidence="1">
    <location>
        <position position="215"/>
    </location>
    <ligand>
        <name>a quinone</name>
        <dbReference type="ChEBI" id="CHEBI:132124"/>
        <label>B</label>
    </ligand>
</feature>
<feature type="binding site" evidence="1">
    <location>
        <position position="215"/>
    </location>
    <ligand>
        <name>Fe cation</name>
        <dbReference type="ChEBI" id="CHEBI:24875"/>
        <note>ligand shared with heterodimeric partner</note>
    </ligand>
</feature>
<feature type="binding site" evidence="1">
    <location>
        <begin position="264"/>
        <end position="265"/>
    </location>
    <ligand>
        <name>a quinone</name>
        <dbReference type="ChEBI" id="CHEBI:132124"/>
        <label>B</label>
    </ligand>
</feature>
<feature type="binding site" evidence="1">
    <location>
        <position position="272"/>
    </location>
    <ligand>
        <name>Fe cation</name>
        <dbReference type="ChEBI" id="CHEBI:24875"/>
        <note>ligand shared with heterodimeric partner</note>
    </ligand>
</feature>
<feature type="binding site" evidence="1">
    <location>
        <position position="332"/>
    </location>
    <ligand>
        <name>[CaMn4O5] cluster</name>
        <dbReference type="ChEBI" id="CHEBI:189552"/>
    </ligand>
</feature>
<feature type="binding site" evidence="1">
    <location>
        <position position="333"/>
    </location>
    <ligand>
        <name>[CaMn4O5] cluster</name>
        <dbReference type="ChEBI" id="CHEBI:189552"/>
    </ligand>
</feature>
<feature type="binding site" evidence="1">
    <location>
        <position position="342"/>
    </location>
    <ligand>
        <name>[CaMn4O5] cluster</name>
        <dbReference type="ChEBI" id="CHEBI:189552"/>
    </ligand>
</feature>
<feature type="binding site" evidence="1">
    <location>
        <position position="344"/>
    </location>
    <ligand>
        <name>[CaMn4O5] cluster</name>
        <dbReference type="ChEBI" id="CHEBI:189552"/>
    </ligand>
</feature>
<feature type="site" description="Tyrosine radical intermediate" evidence="1">
    <location>
        <position position="161"/>
    </location>
</feature>
<feature type="site" description="Stabilizes free radical intermediate" evidence="1">
    <location>
        <position position="190"/>
    </location>
</feature>
<feature type="site" description="Cleavage; by CtpA" evidence="1">
    <location>
        <begin position="344"/>
        <end position="345"/>
    </location>
</feature>
<comment type="function">
    <text evidence="1">Photosystem II (PSII) is a light-driven water:plastoquinone oxidoreductase that uses light energy to abstract electrons from H(2)O, generating O(2) and a proton gradient subsequently used for ATP formation. It consists of a core antenna complex that captures photons, and an electron transfer chain that converts photonic excitation into a charge separation. The D1/D2 (PsbA/PsbD) reaction center heterodimer binds P680, the primary electron donor of PSII as well as several subsequent electron acceptors.</text>
</comment>
<comment type="catalytic activity">
    <reaction evidence="1">
        <text>2 a plastoquinone + 4 hnu + 2 H2O = 2 a plastoquinol + O2</text>
        <dbReference type="Rhea" id="RHEA:36359"/>
        <dbReference type="Rhea" id="RHEA-COMP:9561"/>
        <dbReference type="Rhea" id="RHEA-COMP:9562"/>
        <dbReference type="ChEBI" id="CHEBI:15377"/>
        <dbReference type="ChEBI" id="CHEBI:15379"/>
        <dbReference type="ChEBI" id="CHEBI:17757"/>
        <dbReference type="ChEBI" id="CHEBI:30212"/>
        <dbReference type="ChEBI" id="CHEBI:62192"/>
        <dbReference type="EC" id="1.10.3.9"/>
    </reaction>
</comment>
<comment type="cofactor">
    <text evidence="1">The D1/D2 heterodimer binds P680, chlorophylls that are the primary electron donor of PSII, and subsequent electron acceptors. It shares a non-heme iron and each subunit binds pheophytin, quinone, additional chlorophylls, carotenoids and lipids. D1 provides most of the ligands for the Mn4-Ca-O5 cluster of the oxygen-evolving complex (OEC). There is also a Cl(-1) ion associated with D1 and D2, which is required for oxygen evolution. The PSII complex binds additional chlorophylls, carotenoids and specific lipids.</text>
</comment>
<comment type="subunit">
    <text evidence="3">PSII is composed of 1 copy each of membrane proteins PsbA, PsbB, PsbC, PsbD, PsbE, PsbF, PsbH, PsbI, PsbJ, PsbK, PsbL, PsbM, PsbT, PsbX, Psb30/Ycf12, peripheral proteins PsbO, CyanoQ (PsbQ), PsbU, PsbV and a large number of cofactors. It forms dimeric complexes.</text>
</comment>
<comment type="subcellular location">
    <subcellularLocation>
        <location evidence="1">Cell inner membrane</location>
        <topology evidence="1">Multi-pass membrane protein</topology>
    </subcellularLocation>
</comment>
<comment type="PTM">
    <text evidence="1">Tyr-161 forms a radical intermediate that is referred to as redox-active TyrZ, YZ or Y-Z.</text>
</comment>
<comment type="PTM">
    <text evidence="1">C-terminally processed by CtpA; processing is essential to allow assembly of the oxygen-evolving complex and thus photosynthetic growth.</text>
</comment>
<comment type="miscellaneous">
    <text evidence="1">Cyanobacteria usually contain more than 2 copies of the psbA gene.</text>
</comment>
<comment type="miscellaneous">
    <text evidence="1">2 of the reaction center chlorophylls (ChlD1 and ChlD2) are entirely coordinated by water.</text>
</comment>
<comment type="miscellaneous">
    <text evidence="1">Herbicides such as atrazine, BNT, diuron or ioxynil bind in the Q(B) binding site and block subsequent electron transfer.</text>
</comment>
<comment type="similarity">
    <text evidence="1">Belongs to the reaction center PufL/M/PsbA/D family.</text>
</comment>
<proteinExistence type="inferred from homology"/>
<sequence>MTATLERRSSQGLWDRFADWVTSTNNRFYVGWFGVLMIPTLLSATICFVVAFVAAPPVDMDGIREPISGSLLYGNNIITGAVIPSSNAIGLHFYPIWEAASMDEWLYNGGPYQLVVFHFLIGVFCYLGREWELSYRLGLRPWICIAYSAPVAAAAAVFLIYPIGQGSFSDGMPLGISGTFNFMFVFQAEHNILNHPFHMLGVAGVFGGSLFSAMHGSLVTSSLIRETSMEESQNYGYKFGQEEETYNIIAAHGYFGRLIFQYASFNNSRSLHFFLAAWPVIGIWFTALGISVMAFNLNGFNFNSSIVDSQGRAIYTWADIVNRANLGMEVMHERNAHNFPLDLAGTESAPVAVGNADLNG</sequence>
<dbReference type="EC" id="1.10.3.9" evidence="1"/>
<dbReference type="EMBL" id="BA000045">
    <property type="protein sequence ID" value="BAC88720.1"/>
    <property type="molecule type" value="Genomic_DNA"/>
</dbReference>
<dbReference type="EMBL" id="BA000045">
    <property type="protein sequence ID" value="BAC90263.1"/>
    <property type="molecule type" value="Genomic_DNA"/>
</dbReference>
<dbReference type="EMBL" id="BA000045">
    <property type="protein sequence ID" value="BAC91085.1"/>
    <property type="molecule type" value="Genomic_DNA"/>
</dbReference>
<dbReference type="RefSeq" id="NP_923725.1">
    <property type="nucleotide sequence ID" value="NC_005125.1"/>
</dbReference>
<dbReference type="RefSeq" id="NP_925268.1">
    <property type="nucleotide sequence ID" value="NC_005125.1"/>
</dbReference>
<dbReference type="RefSeq" id="NP_926090.1">
    <property type="nucleotide sequence ID" value="NC_005125.1"/>
</dbReference>
<dbReference type="RefSeq" id="WP_011140781.1">
    <property type="nucleotide sequence ID" value="NC_005125.1"/>
</dbReference>
<dbReference type="SMR" id="Q7M7A9"/>
<dbReference type="STRING" id="251221.gene:10758256"/>
<dbReference type="EnsemblBacteria" id="BAC88720">
    <property type="protein sequence ID" value="BAC88720"/>
    <property type="gene ID" value="BAC88720"/>
</dbReference>
<dbReference type="EnsemblBacteria" id="BAC90263">
    <property type="protein sequence ID" value="BAC90263"/>
    <property type="gene ID" value="BAC90263"/>
</dbReference>
<dbReference type="EnsemblBacteria" id="BAC91085">
    <property type="protein sequence ID" value="BAC91085"/>
    <property type="gene ID" value="BAC91085"/>
</dbReference>
<dbReference type="KEGG" id="gvi:gll3144"/>
<dbReference type="KEGG" id="gvi:glr0779"/>
<dbReference type="KEGG" id="gvi:glr2322"/>
<dbReference type="PATRIC" id="fig|251221.4.peg.2359"/>
<dbReference type="eggNOG" id="ENOG502Z87P">
    <property type="taxonomic scope" value="Bacteria"/>
</dbReference>
<dbReference type="HOGENOM" id="CLU_054206_1_0_3"/>
<dbReference type="InParanoid" id="Q7M7A9"/>
<dbReference type="OrthoDB" id="505356at2"/>
<dbReference type="PhylomeDB" id="Q7M7A9"/>
<dbReference type="Proteomes" id="UP000000557">
    <property type="component" value="Chromosome"/>
</dbReference>
<dbReference type="GO" id="GO:0009523">
    <property type="term" value="C:photosystem II"/>
    <property type="evidence" value="ECO:0000318"/>
    <property type="project" value="GO_Central"/>
</dbReference>
<dbReference type="GO" id="GO:0005886">
    <property type="term" value="C:plasma membrane"/>
    <property type="evidence" value="ECO:0007669"/>
    <property type="project" value="UniProtKB-SubCell"/>
</dbReference>
<dbReference type="GO" id="GO:0016168">
    <property type="term" value="F:chlorophyll binding"/>
    <property type="evidence" value="ECO:0007669"/>
    <property type="project" value="UniProtKB-UniRule"/>
</dbReference>
<dbReference type="GO" id="GO:0045156">
    <property type="term" value="F:electron transporter, transferring electrons within the cyclic electron transport pathway of photosynthesis activity"/>
    <property type="evidence" value="ECO:0007669"/>
    <property type="project" value="InterPro"/>
</dbReference>
<dbReference type="GO" id="GO:0005506">
    <property type="term" value="F:iron ion binding"/>
    <property type="evidence" value="ECO:0007669"/>
    <property type="project" value="UniProtKB-UniRule"/>
</dbReference>
<dbReference type="GO" id="GO:0016682">
    <property type="term" value="F:oxidoreductase activity, acting on diphenols and related substances as donors, oxygen as acceptor"/>
    <property type="evidence" value="ECO:0007669"/>
    <property type="project" value="UniProtKB-UniRule"/>
</dbReference>
<dbReference type="GO" id="GO:0010242">
    <property type="term" value="F:oxygen evolving activity"/>
    <property type="evidence" value="ECO:0007669"/>
    <property type="project" value="UniProtKB-EC"/>
</dbReference>
<dbReference type="GO" id="GO:0009772">
    <property type="term" value="P:photosynthetic electron transport in photosystem II"/>
    <property type="evidence" value="ECO:0007669"/>
    <property type="project" value="InterPro"/>
</dbReference>
<dbReference type="GO" id="GO:0009635">
    <property type="term" value="P:response to herbicide"/>
    <property type="evidence" value="ECO:0007669"/>
    <property type="project" value="UniProtKB-KW"/>
</dbReference>
<dbReference type="FunFam" id="1.20.85.10:FF:000002">
    <property type="entry name" value="Photosystem II protein D1"/>
    <property type="match status" value="1"/>
</dbReference>
<dbReference type="Gene3D" id="1.20.85.10">
    <property type="entry name" value="Photosystem II protein D1-like"/>
    <property type="match status" value="1"/>
</dbReference>
<dbReference type="HAMAP" id="MF_01379">
    <property type="entry name" value="PSII_PsbA_D1"/>
    <property type="match status" value="1"/>
</dbReference>
<dbReference type="InterPro" id="IPR055266">
    <property type="entry name" value="D1/D2"/>
</dbReference>
<dbReference type="InterPro" id="IPR036854">
    <property type="entry name" value="Photo_II_D1/D2_sf"/>
</dbReference>
<dbReference type="InterPro" id="IPR000484">
    <property type="entry name" value="Photo_RC_L/M"/>
</dbReference>
<dbReference type="InterPro" id="IPR055265">
    <property type="entry name" value="Photo_RC_L/M_CS"/>
</dbReference>
<dbReference type="InterPro" id="IPR005867">
    <property type="entry name" value="PSII_D1"/>
</dbReference>
<dbReference type="NCBIfam" id="TIGR01151">
    <property type="entry name" value="psbA"/>
    <property type="match status" value="1"/>
</dbReference>
<dbReference type="PANTHER" id="PTHR33149:SF12">
    <property type="entry name" value="PHOTOSYSTEM II D2 PROTEIN"/>
    <property type="match status" value="1"/>
</dbReference>
<dbReference type="PANTHER" id="PTHR33149">
    <property type="entry name" value="PHOTOSYSTEM II PROTEIN D1"/>
    <property type="match status" value="1"/>
</dbReference>
<dbReference type="Pfam" id="PF00124">
    <property type="entry name" value="Photo_RC"/>
    <property type="match status" value="1"/>
</dbReference>
<dbReference type="PRINTS" id="PR00256">
    <property type="entry name" value="REACTNCENTRE"/>
</dbReference>
<dbReference type="SUPFAM" id="SSF81483">
    <property type="entry name" value="Bacterial photosystem II reaction centre, L and M subunits"/>
    <property type="match status" value="1"/>
</dbReference>
<dbReference type="PROSITE" id="PS00244">
    <property type="entry name" value="REACTION_CENTER"/>
    <property type="match status" value="1"/>
</dbReference>
<organism>
    <name type="scientific">Gloeobacter violaceus (strain ATCC 29082 / PCC 7421)</name>
    <dbReference type="NCBI Taxonomy" id="251221"/>
    <lineage>
        <taxon>Bacteria</taxon>
        <taxon>Bacillati</taxon>
        <taxon>Cyanobacteriota</taxon>
        <taxon>Cyanophyceae</taxon>
        <taxon>Gloeobacterales</taxon>
        <taxon>Gloeobacteraceae</taxon>
        <taxon>Gloeobacter</taxon>
    </lineage>
</organism>
<keyword id="KW-0106">Calcium</keyword>
<keyword id="KW-0997">Cell inner membrane</keyword>
<keyword id="KW-1003">Cell membrane</keyword>
<keyword id="KW-0148">Chlorophyll</keyword>
<keyword id="KW-0157">Chromophore</keyword>
<keyword id="KW-0249">Electron transport</keyword>
<keyword id="KW-0359">Herbicide resistance</keyword>
<keyword id="KW-0408">Iron</keyword>
<keyword id="KW-0460">Magnesium</keyword>
<keyword id="KW-0464">Manganese</keyword>
<keyword id="KW-0472">Membrane</keyword>
<keyword id="KW-0479">Metal-binding</keyword>
<keyword id="KW-0560">Oxidoreductase</keyword>
<keyword id="KW-0602">Photosynthesis</keyword>
<keyword id="KW-0604">Photosystem II</keyword>
<keyword id="KW-1185">Reference proteome</keyword>
<keyword id="KW-0812">Transmembrane</keyword>
<keyword id="KW-1133">Transmembrane helix</keyword>
<keyword id="KW-0813">Transport</keyword>
<gene>
    <name evidence="1 2" type="primary">psbA1</name>
    <name type="ordered locus">gll3144</name>
</gene>
<gene>
    <name evidence="1 2" type="primary">psbA3</name>
    <name type="ordered locus">glr0779</name>
</gene>
<gene>
    <name evidence="1 2" type="primary">psbA5</name>
    <name type="ordered locus">glr2322</name>
</gene>
<evidence type="ECO:0000255" key="1">
    <source>
        <dbReference type="HAMAP-Rule" id="MF_01379"/>
    </source>
</evidence>
<evidence type="ECO:0000305" key="2"/>
<evidence type="ECO:0000305" key="3">
    <source>
    </source>
</evidence>
<name>PSBA1_GLOVI</name>